<evidence type="ECO:0000255" key="1">
    <source>
        <dbReference type="HAMAP-Rule" id="MF_03156"/>
    </source>
</evidence>
<evidence type="ECO:0000269" key="2">
    <source>
    </source>
</evidence>
<organism>
    <name type="scientific">Leishmania donovani</name>
    <dbReference type="NCBI Taxonomy" id="5661"/>
    <lineage>
        <taxon>Eukaryota</taxon>
        <taxon>Discoba</taxon>
        <taxon>Euglenozoa</taxon>
        <taxon>Kinetoplastea</taxon>
        <taxon>Metakinetoplastina</taxon>
        <taxon>Trypanosomatida</taxon>
        <taxon>Trypanosomatidae</taxon>
        <taxon>Leishmaniinae</taxon>
        <taxon>Leishmania</taxon>
    </lineage>
</organism>
<protein>
    <recommendedName>
        <fullName evidence="1">Inosine-5'-monophosphate dehydrogenase</fullName>
        <shortName evidence="1">IMP dehydrogenase</shortName>
        <shortName evidence="1">IMPD</shortName>
        <shortName evidence="1">IMPDH</shortName>
        <ecNumber evidence="1">1.1.1.205</ecNumber>
    </recommendedName>
</protein>
<comment type="function">
    <text evidence="1 2">Catalyzes the conversion of inosine 5'-phosphate (IMP) to xanthosine 5'-phosphate (XMP), the first committed and rate-limiting step in the de novo synthesis of guanine nucleotides, and therefore plays an important role in the regulation of cell growth.</text>
</comment>
<comment type="catalytic activity">
    <reaction evidence="1">
        <text>IMP + NAD(+) + H2O = XMP + NADH + H(+)</text>
        <dbReference type="Rhea" id="RHEA:11708"/>
        <dbReference type="ChEBI" id="CHEBI:15377"/>
        <dbReference type="ChEBI" id="CHEBI:15378"/>
        <dbReference type="ChEBI" id="CHEBI:57464"/>
        <dbReference type="ChEBI" id="CHEBI:57540"/>
        <dbReference type="ChEBI" id="CHEBI:57945"/>
        <dbReference type="ChEBI" id="CHEBI:58053"/>
        <dbReference type="EC" id="1.1.1.205"/>
    </reaction>
</comment>
<comment type="cofactor">
    <cofactor evidence="1">
        <name>K(+)</name>
        <dbReference type="ChEBI" id="CHEBI:29103"/>
    </cofactor>
</comment>
<comment type="activity regulation">
    <text evidence="1 2">Mycophenolic acid (MPA) is a non-competitive inhibitor that prevents formation of the closed enzyme conformation by binding to the same site as the amobile flap. In contrast, mizoribine monophosphate (MZP) is a competitive inhibitor that induces the closed conformation. MPA is a potent inhibitor of mammalian IMPDHs but a poor inhibitor of the bacterial enzymes. MZP is a more potent inhibitor of bacterial IMPDH. Potently inhibited by MPA. Inhibited by XMP and GMP.</text>
</comment>
<comment type="biophysicochemical properties">
    <kinetics>
        <KM evidence="2">33 uM for Inosine 5'-phosphate</KM>
        <KM evidence="2">390 uM for NAD(+)</KM>
    </kinetics>
</comment>
<comment type="pathway">
    <text evidence="1">Purine metabolism; XMP biosynthesis via de novo pathway; XMP from IMP: step 1/1.</text>
</comment>
<comment type="subunit">
    <text evidence="2">Heterotetramer. Interacts with glycosomal protein sorting receptor PEX5.</text>
</comment>
<comment type="subcellular location">
    <subcellularLocation>
        <location evidence="1 2">Glycosome</location>
    </subcellularLocation>
</comment>
<comment type="similarity">
    <text evidence="1">Belongs to the IMPDH/GMPR family.</text>
</comment>
<dbReference type="EC" id="1.1.1.205" evidence="1"/>
<dbReference type="EMBL" id="M55667">
    <property type="protein sequence ID" value="AAA29253.1"/>
    <property type="molecule type" value="Genomic_DNA"/>
</dbReference>
<dbReference type="PIR" id="A38668">
    <property type="entry name" value="A38668"/>
</dbReference>
<dbReference type="RefSeq" id="XP_003860332.1">
    <property type="nucleotide sequence ID" value="XM_003860284.1"/>
</dbReference>
<dbReference type="SMR" id="P21620"/>
<dbReference type="GeneID" id="13386143"/>
<dbReference type="KEGG" id="ldo:LDBPK_191590"/>
<dbReference type="VEuPathDB" id="TriTrypDB:LdBPK_191590.1"/>
<dbReference type="VEuPathDB" id="TriTrypDB:LdCL_190021700"/>
<dbReference type="VEuPathDB" id="TriTrypDB:LDHU3_19.1930"/>
<dbReference type="OMA" id="MGYCGAK"/>
<dbReference type="OrthoDB" id="416622at2759"/>
<dbReference type="BRENDA" id="1.1.1.205">
    <property type="organism ID" value="2947"/>
</dbReference>
<dbReference type="SABIO-RK" id="P21620"/>
<dbReference type="UniPathway" id="UPA00601">
    <property type="reaction ID" value="UER00295"/>
</dbReference>
<dbReference type="GO" id="GO:0020015">
    <property type="term" value="C:glycosome"/>
    <property type="evidence" value="ECO:0007669"/>
    <property type="project" value="UniProtKB-SubCell"/>
</dbReference>
<dbReference type="GO" id="GO:0003938">
    <property type="term" value="F:IMP dehydrogenase activity"/>
    <property type="evidence" value="ECO:0007669"/>
    <property type="project" value="UniProtKB-UniRule"/>
</dbReference>
<dbReference type="GO" id="GO:0046872">
    <property type="term" value="F:metal ion binding"/>
    <property type="evidence" value="ECO:0007669"/>
    <property type="project" value="UniProtKB-UniRule"/>
</dbReference>
<dbReference type="GO" id="GO:0000166">
    <property type="term" value="F:nucleotide binding"/>
    <property type="evidence" value="ECO:0007669"/>
    <property type="project" value="UniProtKB-UniRule"/>
</dbReference>
<dbReference type="GO" id="GO:0006177">
    <property type="term" value="P:GMP biosynthetic process"/>
    <property type="evidence" value="ECO:0007669"/>
    <property type="project" value="UniProtKB-UniRule"/>
</dbReference>
<dbReference type="GO" id="GO:0006183">
    <property type="term" value="P:GTP biosynthetic process"/>
    <property type="evidence" value="ECO:0007669"/>
    <property type="project" value="TreeGrafter"/>
</dbReference>
<dbReference type="CDD" id="cd04601">
    <property type="entry name" value="CBS_pair_IMPDH"/>
    <property type="match status" value="1"/>
</dbReference>
<dbReference type="CDD" id="cd00381">
    <property type="entry name" value="IMPDH"/>
    <property type="match status" value="1"/>
</dbReference>
<dbReference type="FunFam" id="3.20.20.70:FF:000086">
    <property type="entry name" value="IMP dehydrogenase, putative"/>
    <property type="match status" value="1"/>
</dbReference>
<dbReference type="Gene3D" id="3.20.20.70">
    <property type="entry name" value="Aldolase class I"/>
    <property type="match status" value="1"/>
</dbReference>
<dbReference type="HAMAP" id="MF_01964">
    <property type="entry name" value="IMPDH"/>
    <property type="match status" value="1"/>
</dbReference>
<dbReference type="InterPro" id="IPR013785">
    <property type="entry name" value="Aldolase_TIM"/>
</dbReference>
<dbReference type="InterPro" id="IPR000644">
    <property type="entry name" value="CBS_dom"/>
</dbReference>
<dbReference type="InterPro" id="IPR046342">
    <property type="entry name" value="CBS_dom_sf"/>
</dbReference>
<dbReference type="InterPro" id="IPR005990">
    <property type="entry name" value="IMP_DH"/>
</dbReference>
<dbReference type="InterPro" id="IPR015875">
    <property type="entry name" value="IMP_DH/GMP_Rdtase_CS"/>
</dbReference>
<dbReference type="InterPro" id="IPR001093">
    <property type="entry name" value="IMP_DH_GMPRt"/>
</dbReference>
<dbReference type="NCBIfam" id="TIGR01302">
    <property type="entry name" value="IMP_dehydrog"/>
    <property type="match status" value="1"/>
</dbReference>
<dbReference type="PANTHER" id="PTHR11911:SF111">
    <property type="entry name" value="INOSINE-5'-MONOPHOSPHATE DEHYDROGENASE"/>
    <property type="match status" value="1"/>
</dbReference>
<dbReference type="PANTHER" id="PTHR11911">
    <property type="entry name" value="INOSINE-5-MONOPHOSPHATE DEHYDROGENASE RELATED"/>
    <property type="match status" value="1"/>
</dbReference>
<dbReference type="Pfam" id="PF00571">
    <property type="entry name" value="CBS"/>
    <property type="match status" value="2"/>
</dbReference>
<dbReference type="Pfam" id="PF00478">
    <property type="entry name" value="IMPDH"/>
    <property type="match status" value="1"/>
</dbReference>
<dbReference type="PIRSF" id="PIRSF000130">
    <property type="entry name" value="IMPDH"/>
    <property type="match status" value="1"/>
</dbReference>
<dbReference type="SMART" id="SM00116">
    <property type="entry name" value="CBS"/>
    <property type="match status" value="2"/>
</dbReference>
<dbReference type="SMART" id="SM01240">
    <property type="entry name" value="IMPDH"/>
    <property type="match status" value="1"/>
</dbReference>
<dbReference type="SUPFAM" id="SSF54631">
    <property type="entry name" value="CBS-domain pair"/>
    <property type="match status" value="1"/>
</dbReference>
<dbReference type="SUPFAM" id="SSF51412">
    <property type="entry name" value="Inosine monophosphate dehydrogenase (IMPDH)"/>
    <property type="match status" value="1"/>
</dbReference>
<dbReference type="PROSITE" id="PS51371">
    <property type="entry name" value="CBS"/>
    <property type="match status" value="2"/>
</dbReference>
<dbReference type="PROSITE" id="PS00487">
    <property type="entry name" value="IMP_DH_GMP_RED"/>
    <property type="match status" value="1"/>
</dbReference>
<proteinExistence type="evidence at protein level"/>
<keyword id="KW-0129">CBS domain</keyword>
<keyword id="KW-0327">Glycosome</keyword>
<keyword id="KW-0332">GMP biosynthesis</keyword>
<keyword id="KW-0479">Metal-binding</keyword>
<keyword id="KW-0520">NAD</keyword>
<keyword id="KW-0560">Oxidoreductase</keyword>
<keyword id="KW-0576">Peroxisome</keyword>
<keyword id="KW-0630">Potassium</keyword>
<keyword id="KW-0658">Purine biosynthesis</keyword>
<keyword id="KW-0677">Repeat</keyword>
<feature type="chain" id="PRO_0000093675" description="Inosine-5'-monophosphate dehydrogenase">
    <location>
        <begin position="1"/>
        <end position="514"/>
    </location>
</feature>
<feature type="domain" description="CBS 1" evidence="1">
    <location>
        <begin position="112"/>
        <end position="171"/>
    </location>
</feature>
<feature type="domain" description="CBS 2" evidence="1">
    <location>
        <begin position="175"/>
        <end position="233"/>
    </location>
</feature>
<feature type="short sequence motif" description="Microbody targeting signal" evidence="1">
    <location>
        <begin position="512"/>
        <end position="514"/>
    </location>
</feature>
<feature type="active site" description="Thioimidate intermediate" evidence="1">
    <location>
        <position position="327"/>
    </location>
</feature>
<feature type="active site" description="Proton acceptor" evidence="1">
    <location>
        <position position="425"/>
    </location>
</feature>
<feature type="binding site" evidence="1">
    <location>
        <begin position="270"/>
        <end position="272"/>
    </location>
    <ligand>
        <name>NAD(+)</name>
        <dbReference type="ChEBI" id="CHEBI:57540"/>
    </ligand>
</feature>
<feature type="binding site" evidence="1">
    <location>
        <begin position="320"/>
        <end position="322"/>
    </location>
    <ligand>
        <name>NAD(+)</name>
        <dbReference type="ChEBI" id="CHEBI:57540"/>
    </ligand>
</feature>
<feature type="binding site" description="in other chain" evidence="1">
    <location>
        <position position="322"/>
    </location>
    <ligand>
        <name>K(+)</name>
        <dbReference type="ChEBI" id="CHEBI:29103"/>
        <note>ligand shared between two tetrameric partners</note>
    </ligand>
</feature>
<feature type="binding site" description="in other chain" evidence="1">
    <location>
        <position position="324"/>
    </location>
    <ligand>
        <name>K(+)</name>
        <dbReference type="ChEBI" id="CHEBI:29103"/>
        <note>ligand shared between two tetrameric partners</note>
    </ligand>
</feature>
<feature type="binding site" evidence="1">
    <location>
        <position position="325"/>
    </location>
    <ligand>
        <name>IMP</name>
        <dbReference type="ChEBI" id="CHEBI:58053"/>
    </ligand>
</feature>
<feature type="binding site" description="in other chain" evidence="1">
    <location>
        <position position="327"/>
    </location>
    <ligand>
        <name>K(+)</name>
        <dbReference type="ChEBI" id="CHEBI:29103"/>
        <note>ligand shared between two tetrameric partners</note>
    </ligand>
</feature>
<feature type="binding site" evidence="1">
    <location>
        <begin position="360"/>
        <end position="362"/>
    </location>
    <ligand>
        <name>IMP</name>
        <dbReference type="ChEBI" id="CHEBI:58053"/>
    </ligand>
</feature>
<feature type="binding site" evidence="1">
    <location>
        <begin position="383"/>
        <end position="384"/>
    </location>
    <ligand>
        <name>IMP</name>
        <dbReference type="ChEBI" id="CHEBI:58053"/>
    </ligand>
</feature>
<feature type="binding site" evidence="1">
    <location>
        <begin position="407"/>
        <end position="411"/>
    </location>
    <ligand>
        <name>IMP</name>
        <dbReference type="ChEBI" id="CHEBI:58053"/>
    </ligand>
</feature>
<feature type="binding site" evidence="1">
    <location>
        <position position="437"/>
    </location>
    <ligand>
        <name>IMP</name>
        <dbReference type="ChEBI" id="CHEBI:58053"/>
    </ligand>
</feature>
<feature type="binding site" evidence="1">
    <location>
        <position position="496"/>
    </location>
    <ligand>
        <name>K(+)</name>
        <dbReference type="ChEBI" id="CHEBI:29103"/>
        <note>ligand shared between two tetrameric partners</note>
    </ligand>
</feature>
<feature type="binding site" evidence="1">
    <location>
        <position position="497"/>
    </location>
    <ligand>
        <name>K(+)</name>
        <dbReference type="ChEBI" id="CHEBI:29103"/>
        <note>ligand shared between two tetrameric partners</note>
    </ligand>
</feature>
<feature type="binding site" evidence="1">
    <location>
        <position position="498"/>
    </location>
    <ligand>
        <name>K(+)</name>
        <dbReference type="ChEBI" id="CHEBI:29103"/>
        <note>ligand shared between two tetrameric partners</note>
    </ligand>
</feature>
<accession>P21620</accession>
<name>IMDH_LEIDO</name>
<sequence length="514" mass="55552">MATNNANYRIKTIKDGCTAEELFRGDGLTYNDFIILPGFIDFGAADVNISGQFTKRIRLHIPIVSSPMDTITENEMAKTMALMGGVGVLHNNCTVERQVEMVKSVKAYRNGFISKPKSVPPNTPISNIIRIKEEKGISGILVTENGDPHGKLLGIVCTKDIDYVKNKDTPVSAVMTRREKMTVERAPIQLEEAMDVLNRSRYGYLPIVNENDEVVNLCSRRDAVRARDYPHSTLDKSGRLICAAATSTRPEDKRRVAALADVGVDVLVLDSSQGNTIYQIAFIKWVKSTYPHLEVVAGNVVTQDQAKNLIDAGADGIRIGMGSGSICITQEVLACGRPQGTAVYKVAQYCASRGVPCTADGGLRQVGDICKALAIGANCAMLGGMLSGTTETPGEYFFKGGVRLKVYRGMGSLEAMSQGKESGKRYLSENEAVQVAQGVSGNVVDKGSAAKLIAYVSKGLQQSAQDIGEISFDAIREKMYAGQVLFSRRSPTAQGEGGVHSLHSYEKKLFAAKM</sequence>
<reference key="1">
    <citation type="journal article" date="1991" name="J. Biol. Chem.">
        <title>Amplification and molecular cloning of the IMP dehydrogenase gene of Leishmania donovani.</title>
        <authorList>
            <person name="Wilson K.E."/>
            <person name="Collart F.R."/>
            <person name="Huberman E."/>
            <person name="Stringer J.R."/>
            <person name="Ullman B."/>
        </authorList>
    </citation>
    <scope>NUCLEOTIDE SEQUENCE [GENOMIC DNA]</scope>
</reference>
<reference key="2">
    <citation type="journal article" date="2007" name="Mol. Biochem. Parasitol.">
        <title>Kinetic characterization of inosine monophosphate dehydrogenase of Leishmania donovani.</title>
        <authorList>
            <person name="Dobie F."/>
            <person name="Berg A."/>
            <person name="Boitz J.M."/>
            <person name="Jardim A."/>
        </authorList>
    </citation>
    <scope>FUNCTION</scope>
    <scope>BIOPHYSICOCHEMICAL PROPERTIES</scope>
    <scope>ACTIVITY REGULATION</scope>
    <scope>SUBCELLULAR LOCATION</scope>
    <scope>INTERACTION WITH PEX5</scope>
    <scope>SUBUNIT</scope>
</reference>